<gene>
    <name evidence="1" type="primary">rpsL</name>
    <name type="ordered locus">VP2773</name>
</gene>
<protein>
    <recommendedName>
        <fullName evidence="1">Small ribosomal subunit protein uS12</fullName>
    </recommendedName>
    <alternativeName>
        <fullName evidence="2">30S ribosomal protein S12</fullName>
    </alternativeName>
</protein>
<proteinExistence type="inferred from homology"/>
<evidence type="ECO:0000255" key="1">
    <source>
        <dbReference type="HAMAP-Rule" id="MF_00403"/>
    </source>
</evidence>
<evidence type="ECO:0000305" key="2"/>
<comment type="function">
    <text evidence="1">With S4 and S5 plays an important role in translational accuracy.</text>
</comment>
<comment type="function">
    <text evidence="1">Interacts with and stabilizes bases of the 16S rRNA that are involved in tRNA selection in the A site and with the mRNA backbone. Located at the interface of the 30S and 50S subunits, it traverses the body of the 30S subunit contacting proteins on the other side and probably holding the rRNA structure together. The combined cluster of proteins S8, S12 and S17 appears to hold together the shoulder and platform of the 30S subunit.</text>
</comment>
<comment type="subunit">
    <text evidence="1">Part of the 30S ribosomal subunit. Contacts proteins S8 and S17. May interact with IF1 in the 30S initiation complex.</text>
</comment>
<comment type="similarity">
    <text evidence="1">Belongs to the universal ribosomal protein uS12 family.</text>
</comment>
<comment type="caution">
    <text evidence="2">Because the enzyme that would modify Asp-89 to 3-methylthioaspartic acid has not been found in the proteome of this organism, that modification is not predicted.</text>
</comment>
<sequence>MATINQLVRKPRAKQVVKSNVPALEACPQKRGVCTRVYTTTPKKPNSALRKVCRVRLTNGFEVTSYIGGEGHNLQEHSVVLIRGGRVKDLPGVRYHTVRGALDCAGVNDRKQGRSKYGVKRPKS</sequence>
<keyword id="KW-0687">Ribonucleoprotein</keyword>
<keyword id="KW-0689">Ribosomal protein</keyword>
<keyword id="KW-0694">RNA-binding</keyword>
<keyword id="KW-0699">rRNA-binding</keyword>
<keyword id="KW-0820">tRNA-binding</keyword>
<accession>Q87L43</accession>
<name>RS12_VIBPA</name>
<feature type="chain" id="PRO_0000146351" description="Small ribosomal subunit protein uS12">
    <location>
        <begin position="1"/>
        <end position="124"/>
    </location>
</feature>
<dbReference type="EMBL" id="BA000031">
    <property type="protein sequence ID" value="BAC61036.1"/>
    <property type="molecule type" value="Genomic_DNA"/>
</dbReference>
<dbReference type="RefSeq" id="NP_799152.1">
    <property type="nucleotide sequence ID" value="NC_004603.1"/>
</dbReference>
<dbReference type="RefSeq" id="WP_004399892.1">
    <property type="nucleotide sequence ID" value="NC_004603.1"/>
</dbReference>
<dbReference type="SMR" id="Q87L43"/>
<dbReference type="GeneID" id="97539791"/>
<dbReference type="KEGG" id="vpa:VP2773"/>
<dbReference type="PATRIC" id="fig|223926.6.peg.2669"/>
<dbReference type="eggNOG" id="COG0048">
    <property type="taxonomic scope" value="Bacteria"/>
</dbReference>
<dbReference type="HOGENOM" id="CLU_104295_1_2_6"/>
<dbReference type="PRO" id="PR:Q87L43"/>
<dbReference type="Proteomes" id="UP000002493">
    <property type="component" value="Chromosome 1"/>
</dbReference>
<dbReference type="GO" id="GO:0015935">
    <property type="term" value="C:small ribosomal subunit"/>
    <property type="evidence" value="ECO:0007669"/>
    <property type="project" value="InterPro"/>
</dbReference>
<dbReference type="GO" id="GO:0019843">
    <property type="term" value="F:rRNA binding"/>
    <property type="evidence" value="ECO:0007669"/>
    <property type="project" value="UniProtKB-UniRule"/>
</dbReference>
<dbReference type="GO" id="GO:0003735">
    <property type="term" value="F:structural constituent of ribosome"/>
    <property type="evidence" value="ECO:0007669"/>
    <property type="project" value="InterPro"/>
</dbReference>
<dbReference type="GO" id="GO:0000049">
    <property type="term" value="F:tRNA binding"/>
    <property type="evidence" value="ECO:0007669"/>
    <property type="project" value="UniProtKB-UniRule"/>
</dbReference>
<dbReference type="GO" id="GO:0006412">
    <property type="term" value="P:translation"/>
    <property type="evidence" value="ECO:0007669"/>
    <property type="project" value="UniProtKB-UniRule"/>
</dbReference>
<dbReference type="CDD" id="cd03368">
    <property type="entry name" value="Ribosomal_S12"/>
    <property type="match status" value="1"/>
</dbReference>
<dbReference type="FunFam" id="2.40.50.140:FF:000001">
    <property type="entry name" value="30S ribosomal protein S12"/>
    <property type="match status" value="1"/>
</dbReference>
<dbReference type="Gene3D" id="2.40.50.140">
    <property type="entry name" value="Nucleic acid-binding proteins"/>
    <property type="match status" value="1"/>
</dbReference>
<dbReference type="HAMAP" id="MF_00403_B">
    <property type="entry name" value="Ribosomal_uS12_B"/>
    <property type="match status" value="1"/>
</dbReference>
<dbReference type="InterPro" id="IPR012340">
    <property type="entry name" value="NA-bd_OB-fold"/>
</dbReference>
<dbReference type="InterPro" id="IPR006032">
    <property type="entry name" value="Ribosomal_uS12"/>
</dbReference>
<dbReference type="InterPro" id="IPR005679">
    <property type="entry name" value="Ribosomal_uS12_bac"/>
</dbReference>
<dbReference type="NCBIfam" id="TIGR00981">
    <property type="entry name" value="rpsL_bact"/>
    <property type="match status" value="1"/>
</dbReference>
<dbReference type="PANTHER" id="PTHR11652">
    <property type="entry name" value="30S RIBOSOMAL PROTEIN S12 FAMILY MEMBER"/>
    <property type="match status" value="1"/>
</dbReference>
<dbReference type="Pfam" id="PF00164">
    <property type="entry name" value="Ribosom_S12_S23"/>
    <property type="match status" value="1"/>
</dbReference>
<dbReference type="PIRSF" id="PIRSF002133">
    <property type="entry name" value="Ribosomal_S12/S23"/>
    <property type="match status" value="1"/>
</dbReference>
<dbReference type="PRINTS" id="PR01034">
    <property type="entry name" value="RIBOSOMALS12"/>
</dbReference>
<dbReference type="SUPFAM" id="SSF50249">
    <property type="entry name" value="Nucleic acid-binding proteins"/>
    <property type="match status" value="1"/>
</dbReference>
<dbReference type="PROSITE" id="PS00055">
    <property type="entry name" value="RIBOSOMAL_S12"/>
    <property type="match status" value="1"/>
</dbReference>
<organism>
    <name type="scientific">Vibrio parahaemolyticus serotype O3:K6 (strain RIMD 2210633)</name>
    <dbReference type="NCBI Taxonomy" id="223926"/>
    <lineage>
        <taxon>Bacteria</taxon>
        <taxon>Pseudomonadati</taxon>
        <taxon>Pseudomonadota</taxon>
        <taxon>Gammaproteobacteria</taxon>
        <taxon>Vibrionales</taxon>
        <taxon>Vibrionaceae</taxon>
        <taxon>Vibrio</taxon>
    </lineage>
</organism>
<reference key="1">
    <citation type="journal article" date="2003" name="Lancet">
        <title>Genome sequence of Vibrio parahaemolyticus: a pathogenic mechanism distinct from that of V. cholerae.</title>
        <authorList>
            <person name="Makino K."/>
            <person name="Oshima K."/>
            <person name="Kurokawa K."/>
            <person name="Yokoyama K."/>
            <person name="Uda T."/>
            <person name="Tagomori K."/>
            <person name="Iijima Y."/>
            <person name="Najima M."/>
            <person name="Nakano M."/>
            <person name="Yamashita A."/>
            <person name="Kubota Y."/>
            <person name="Kimura S."/>
            <person name="Yasunaga T."/>
            <person name="Honda T."/>
            <person name="Shinagawa H."/>
            <person name="Hattori M."/>
            <person name="Iida T."/>
        </authorList>
    </citation>
    <scope>NUCLEOTIDE SEQUENCE [LARGE SCALE GENOMIC DNA]</scope>
    <source>
        <strain>RIMD 2210633</strain>
    </source>
</reference>